<name>RSMH_EDWI9</name>
<accession>C5B9E8</accession>
<dbReference type="EC" id="2.1.1.199" evidence="1"/>
<dbReference type="EMBL" id="CP001600">
    <property type="protein sequence ID" value="ACR67949.1"/>
    <property type="molecule type" value="Genomic_DNA"/>
</dbReference>
<dbReference type="RefSeq" id="WP_015870142.1">
    <property type="nucleotide sequence ID" value="NZ_CP169062.1"/>
</dbReference>
<dbReference type="SMR" id="C5B9E8"/>
<dbReference type="STRING" id="67780.B6E78_14270"/>
<dbReference type="GeneID" id="69537789"/>
<dbReference type="KEGG" id="eic:NT01EI_0728"/>
<dbReference type="PATRIC" id="fig|634503.3.peg.656"/>
<dbReference type="HOGENOM" id="CLU_038422_2_0_6"/>
<dbReference type="OrthoDB" id="9806637at2"/>
<dbReference type="Proteomes" id="UP000001485">
    <property type="component" value="Chromosome"/>
</dbReference>
<dbReference type="GO" id="GO:0005737">
    <property type="term" value="C:cytoplasm"/>
    <property type="evidence" value="ECO:0007669"/>
    <property type="project" value="UniProtKB-SubCell"/>
</dbReference>
<dbReference type="GO" id="GO:0071424">
    <property type="term" value="F:rRNA (cytosine-N4-)-methyltransferase activity"/>
    <property type="evidence" value="ECO:0007669"/>
    <property type="project" value="UniProtKB-UniRule"/>
</dbReference>
<dbReference type="GO" id="GO:0070475">
    <property type="term" value="P:rRNA base methylation"/>
    <property type="evidence" value="ECO:0007669"/>
    <property type="project" value="UniProtKB-UniRule"/>
</dbReference>
<dbReference type="FunFam" id="1.10.150.170:FF:000001">
    <property type="entry name" value="Ribosomal RNA small subunit methyltransferase H"/>
    <property type="match status" value="1"/>
</dbReference>
<dbReference type="Gene3D" id="1.10.150.170">
    <property type="entry name" value="Putative methyltransferase TM0872, insert domain"/>
    <property type="match status" value="1"/>
</dbReference>
<dbReference type="Gene3D" id="3.40.50.150">
    <property type="entry name" value="Vaccinia Virus protein VP39"/>
    <property type="match status" value="1"/>
</dbReference>
<dbReference type="HAMAP" id="MF_01007">
    <property type="entry name" value="16SrRNA_methyltr_H"/>
    <property type="match status" value="1"/>
</dbReference>
<dbReference type="InterPro" id="IPR002903">
    <property type="entry name" value="RsmH"/>
</dbReference>
<dbReference type="InterPro" id="IPR023397">
    <property type="entry name" value="SAM-dep_MeTrfase_MraW_recog"/>
</dbReference>
<dbReference type="InterPro" id="IPR029063">
    <property type="entry name" value="SAM-dependent_MTases_sf"/>
</dbReference>
<dbReference type="NCBIfam" id="TIGR00006">
    <property type="entry name" value="16S rRNA (cytosine(1402)-N(4))-methyltransferase RsmH"/>
    <property type="match status" value="1"/>
</dbReference>
<dbReference type="PANTHER" id="PTHR11265:SF0">
    <property type="entry name" value="12S RRNA N4-METHYLCYTIDINE METHYLTRANSFERASE"/>
    <property type="match status" value="1"/>
</dbReference>
<dbReference type="PANTHER" id="PTHR11265">
    <property type="entry name" value="S-ADENOSYL-METHYLTRANSFERASE MRAW"/>
    <property type="match status" value="1"/>
</dbReference>
<dbReference type="Pfam" id="PF01795">
    <property type="entry name" value="Methyltransf_5"/>
    <property type="match status" value="1"/>
</dbReference>
<dbReference type="PIRSF" id="PIRSF004486">
    <property type="entry name" value="MraW"/>
    <property type="match status" value="1"/>
</dbReference>
<dbReference type="SUPFAM" id="SSF81799">
    <property type="entry name" value="Putative methyltransferase TM0872, insert domain"/>
    <property type="match status" value="1"/>
</dbReference>
<dbReference type="SUPFAM" id="SSF53335">
    <property type="entry name" value="S-adenosyl-L-methionine-dependent methyltransferases"/>
    <property type="match status" value="1"/>
</dbReference>
<reference key="1">
    <citation type="submission" date="2009-03" db="EMBL/GenBank/DDBJ databases">
        <title>Complete genome sequence of Edwardsiella ictaluri 93-146.</title>
        <authorList>
            <person name="Williams M.L."/>
            <person name="Gillaspy A.F."/>
            <person name="Dyer D.W."/>
            <person name="Thune R.L."/>
            <person name="Waldbieser G.C."/>
            <person name="Schuster S.C."/>
            <person name="Gipson J."/>
            <person name="Zaitshik J."/>
            <person name="Landry C."/>
            <person name="Lawrence M.L."/>
        </authorList>
    </citation>
    <scope>NUCLEOTIDE SEQUENCE [LARGE SCALE GENOMIC DNA]</scope>
    <source>
        <strain>93-146</strain>
    </source>
</reference>
<sequence>MSENFQHKTVLLDEAVAGLNLRSDGIYIDGTFGRGGHSRLILSQLGAEGRLIAIDRDPQAIAAAAQIDDPRFSIIHGPFSALADYVQEMGLSSRIDGILLDLGVSSPQLDDPERGFSFMRDGPLDMRMDPSRGLSAAQWLMQAEEDDIAWVLKTFGEERFAKRIARAIVERNRTEPLSRTRELAALISDASPFKEKHKHPATRSFQAIRIYINSELDEIERALEGALVALAPQGRLSVISFHSLEDRLVKRFIRQYSRGPQVPKGLPLTEAQLQAQGGPQLKALGKRMPGEREVVDNPRARSSVLRVAERIAR</sequence>
<feature type="chain" id="PRO_0000386862" description="Ribosomal RNA small subunit methyltransferase H">
    <location>
        <begin position="1"/>
        <end position="313"/>
    </location>
</feature>
<feature type="binding site" evidence="1">
    <location>
        <begin position="35"/>
        <end position="37"/>
    </location>
    <ligand>
        <name>S-adenosyl-L-methionine</name>
        <dbReference type="ChEBI" id="CHEBI:59789"/>
    </ligand>
</feature>
<feature type="binding site" evidence="1">
    <location>
        <position position="55"/>
    </location>
    <ligand>
        <name>S-adenosyl-L-methionine</name>
        <dbReference type="ChEBI" id="CHEBI:59789"/>
    </ligand>
</feature>
<feature type="binding site" evidence="1">
    <location>
        <position position="79"/>
    </location>
    <ligand>
        <name>S-adenosyl-L-methionine</name>
        <dbReference type="ChEBI" id="CHEBI:59789"/>
    </ligand>
</feature>
<feature type="binding site" evidence="1">
    <location>
        <position position="101"/>
    </location>
    <ligand>
        <name>S-adenosyl-L-methionine</name>
        <dbReference type="ChEBI" id="CHEBI:59789"/>
    </ligand>
</feature>
<feature type="binding site" evidence="1">
    <location>
        <position position="108"/>
    </location>
    <ligand>
        <name>S-adenosyl-L-methionine</name>
        <dbReference type="ChEBI" id="CHEBI:59789"/>
    </ligand>
</feature>
<evidence type="ECO:0000255" key="1">
    <source>
        <dbReference type="HAMAP-Rule" id="MF_01007"/>
    </source>
</evidence>
<protein>
    <recommendedName>
        <fullName evidence="1">Ribosomal RNA small subunit methyltransferase H</fullName>
        <ecNumber evidence="1">2.1.1.199</ecNumber>
    </recommendedName>
    <alternativeName>
        <fullName evidence="1">16S rRNA m(4)C1402 methyltransferase</fullName>
    </alternativeName>
    <alternativeName>
        <fullName evidence="1">rRNA (cytosine-N(4)-)-methyltransferase RsmH</fullName>
    </alternativeName>
</protein>
<keyword id="KW-0963">Cytoplasm</keyword>
<keyword id="KW-0489">Methyltransferase</keyword>
<keyword id="KW-0698">rRNA processing</keyword>
<keyword id="KW-0949">S-adenosyl-L-methionine</keyword>
<keyword id="KW-0808">Transferase</keyword>
<comment type="function">
    <text evidence="1">Specifically methylates the N4 position of cytidine in position 1402 (C1402) of 16S rRNA.</text>
</comment>
<comment type="catalytic activity">
    <reaction evidence="1">
        <text>cytidine(1402) in 16S rRNA + S-adenosyl-L-methionine = N(4)-methylcytidine(1402) in 16S rRNA + S-adenosyl-L-homocysteine + H(+)</text>
        <dbReference type="Rhea" id="RHEA:42928"/>
        <dbReference type="Rhea" id="RHEA-COMP:10286"/>
        <dbReference type="Rhea" id="RHEA-COMP:10287"/>
        <dbReference type="ChEBI" id="CHEBI:15378"/>
        <dbReference type="ChEBI" id="CHEBI:57856"/>
        <dbReference type="ChEBI" id="CHEBI:59789"/>
        <dbReference type="ChEBI" id="CHEBI:74506"/>
        <dbReference type="ChEBI" id="CHEBI:82748"/>
        <dbReference type="EC" id="2.1.1.199"/>
    </reaction>
</comment>
<comment type="subcellular location">
    <subcellularLocation>
        <location evidence="1">Cytoplasm</location>
    </subcellularLocation>
</comment>
<comment type="similarity">
    <text evidence="1">Belongs to the methyltransferase superfamily. RsmH family.</text>
</comment>
<organism>
    <name type="scientific">Edwardsiella ictaluri (strain 93-146)</name>
    <dbReference type="NCBI Taxonomy" id="634503"/>
    <lineage>
        <taxon>Bacteria</taxon>
        <taxon>Pseudomonadati</taxon>
        <taxon>Pseudomonadota</taxon>
        <taxon>Gammaproteobacteria</taxon>
        <taxon>Enterobacterales</taxon>
        <taxon>Hafniaceae</taxon>
        <taxon>Edwardsiella</taxon>
    </lineage>
</organism>
<gene>
    <name evidence="1" type="primary">rsmH</name>
    <name type="synonym">mraW</name>
    <name type="ordered locus">NT01EI_0728</name>
</gene>
<proteinExistence type="inferred from homology"/>